<comment type="function">
    <text evidence="6 7">Cell surface-associated calcium-binding protein which plays an important role in adhesion and pathogenesis (PubMed:26924733). Mediates interactions with components of the extracellular matrix such as host DSG1 to promote bacterial adhesion to host cells (PubMed:26924733). Contributes to the resistance to killing by innate immune components such as neutrophils present in blood and thus attenuates bacterial clearance (PubMed:27795358).</text>
</comment>
<comment type="subunit">
    <text evidence="6">Interacts with host DSG1; this interaction increases S.aureus adherence to keratinocytes.</text>
</comment>
<comment type="subcellular location">
    <subcellularLocation>
        <location evidence="2 4 5 9">Secreted</location>
        <location evidence="2 4 5 9">Cell wall</location>
        <topology evidence="2 5 9">Peptidoglycan-anchor</topology>
    </subcellularLocation>
    <text evidence="4 9">Found in a ring-like distribution on the cell surface (PubMed:18800056). Colocalizes with ClfB (PubMed:18800056). Anchored to the cell wall by sortase A (Probable).</text>
</comment>
<comment type="induction">
    <text evidence="5">Less protein is secreted in a secG mutant (at protein level).</text>
</comment>
<comment type="disruption phenotype">
    <text evidence="7">About 3.5-fold reduction of survival rate in human blood and about 2-fold reduction in mouse blood.</text>
</comment>
<comment type="similarity">
    <text evidence="8">Belongs to the serine-aspartate repeat-containing protein (SDr) family.</text>
</comment>
<organism>
    <name type="scientific">Staphylococcus aureus (strain NCTC 8325 / PS 47)</name>
    <dbReference type="NCBI Taxonomy" id="93061"/>
    <lineage>
        <taxon>Bacteria</taxon>
        <taxon>Bacillati</taxon>
        <taxon>Bacillota</taxon>
        <taxon>Bacilli</taxon>
        <taxon>Bacillales</taxon>
        <taxon>Staphylococcaceae</taxon>
        <taxon>Staphylococcus</taxon>
    </lineage>
</organism>
<dbReference type="EMBL" id="CP000253">
    <property type="protein sequence ID" value="ABD29693.1"/>
    <property type="molecule type" value="Genomic_DNA"/>
</dbReference>
<dbReference type="RefSeq" id="WP_000934431.1">
    <property type="nucleotide sequence ID" value="NC_007795.1"/>
</dbReference>
<dbReference type="RefSeq" id="YP_499118.1">
    <property type="nucleotide sequence ID" value="NC_007795.1"/>
</dbReference>
<dbReference type="SMR" id="Q2G0L4"/>
<dbReference type="STRING" id="93061.SAOUHSC_00545"/>
<dbReference type="PaxDb" id="1280-SAXN108_0618"/>
<dbReference type="GeneID" id="3920825"/>
<dbReference type="KEGG" id="sao:SAOUHSC_00545"/>
<dbReference type="PATRIC" id="fig|93061.5.peg.491"/>
<dbReference type="eggNOG" id="COG4932">
    <property type="taxonomic scope" value="Bacteria"/>
</dbReference>
<dbReference type="HOGENOM" id="CLU_004137_0_1_9"/>
<dbReference type="OrthoDB" id="2278104at2"/>
<dbReference type="PRO" id="PR:Q2G0L4"/>
<dbReference type="Proteomes" id="UP000008816">
    <property type="component" value="Chromosome"/>
</dbReference>
<dbReference type="GO" id="GO:0005576">
    <property type="term" value="C:extracellular region"/>
    <property type="evidence" value="ECO:0007669"/>
    <property type="project" value="UniProtKB-KW"/>
</dbReference>
<dbReference type="GO" id="GO:0007155">
    <property type="term" value="P:cell adhesion"/>
    <property type="evidence" value="ECO:0007669"/>
    <property type="project" value="InterPro"/>
</dbReference>
<dbReference type="Gene3D" id="2.60.40.1280">
    <property type="match status" value="1"/>
</dbReference>
<dbReference type="Gene3D" id="2.60.40.1290">
    <property type="match status" value="1"/>
</dbReference>
<dbReference type="Gene3D" id="2.60.40.10">
    <property type="entry name" value="Immunoglobulins"/>
    <property type="match status" value="5"/>
</dbReference>
<dbReference type="InterPro" id="IPR011266">
    <property type="entry name" value="Adhesin_Fg-bd_dom_2"/>
</dbReference>
<dbReference type="InterPro" id="IPR008966">
    <property type="entry name" value="Adhesion_dom_sf"/>
</dbReference>
<dbReference type="InterPro" id="IPR011252">
    <property type="entry name" value="Fibrogen-bd_dom1"/>
</dbReference>
<dbReference type="InterPro" id="IPR013783">
    <property type="entry name" value="Ig-like_fold"/>
</dbReference>
<dbReference type="InterPro" id="IPR019931">
    <property type="entry name" value="LPXTG_anchor"/>
</dbReference>
<dbReference type="InterPro" id="IPR033764">
    <property type="entry name" value="Sdr_B"/>
</dbReference>
<dbReference type="InterPro" id="IPR041171">
    <property type="entry name" value="SDR_Ig"/>
</dbReference>
<dbReference type="InterPro" id="IPR005877">
    <property type="entry name" value="YSIRK_signal_dom"/>
</dbReference>
<dbReference type="NCBIfam" id="TIGR01167">
    <property type="entry name" value="LPXTG_anchor"/>
    <property type="match status" value="1"/>
</dbReference>
<dbReference type="NCBIfam" id="NF012181">
    <property type="entry name" value="MSCRAMM_SdrD"/>
    <property type="match status" value="1"/>
</dbReference>
<dbReference type="NCBIfam" id="TIGR01168">
    <property type="entry name" value="YSIRK_signal"/>
    <property type="match status" value="1"/>
</dbReference>
<dbReference type="PANTHER" id="PTHR36108">
    <property type="entry name" value="COLOSSIN-B-RELATED"/>
    <property type="match status" value="1"/>
</dbReference>
<dbReference type="PANTHER" id="PTHR36108:SF13">
    <property type="entry name" value="COLOSSIN-B-RELATED"/>
    <property type="match status" value="1"/>
</dbReference>
<dbReference type="Pfam" id="PF17961">
    <property type="entry name" value="Big_8"/>
    <property type="match status" value="1"/>
</dbReference>
<dbReference type="Pfam" id="PF00746">
    <property type="entry name" value="Gram_pos_anchor"/>
    <property type="match status" value="1"/>
</dbReference>
<dbReference type="Pfam" id="PF17210">
    <property type="entry name" value="SdrD_B"/>
    <property type="match status" value="5"/>
</dbReference>
<dbReference type="Pfam" id="PF10425">
    <property type="entry name" value="SdrG_C_C"/>
    <property type="match status" value="1"/>
</dbReference>
<dbReference type="Pfam" id="PF04650">
    <property type="entry name" value="YSIRK_signal"/>
    <property type="match status" value="1"/>
</dbReference>
<dbReference type="SUPFAM" id="SSF49401">
    <property type="entry name" value="Bacterial adhesins"/>
    <property type="match status" value="2"/>
</dbReference>
<dbReference type="SUPFAM" id="SSF117074">
    <property type="entry name" value="Hypothetical protein PA1324"/>
    <property type="match status" value="5"/>
</dbReference>
<dbReference type="PROSITE" id="PS50847">
    <property type="entry name" value="GRAM_POS_ANCHORING"/>
    <property type="match status" value="1"/>
</dbReference>
<gene>
    <name type="primary">sdrD</name>
    <name type="ordered locus">SAOUHSC_00545</name>
</gene>
<reference key="1">
    <citation type="book" date="2006" name="Gram positive pathogens, 2nd edition">
        <title>The Staphylococcus aureus NCTC 8325 genome.</title>
        <editorList>
            <person name="Fischetti V."/>
            <person name="Novick R."/>
            <person name="Ferretti J."/>
            <person name="Portnoy D."/>
            <person name="Rood J."/>
        </editorList>
        <authorList>
            <person name="Gillaspy A.F."/>
            <person name="Worrell V."/>
            <person name="Orvis J."/>
            <person name="Roe B.A."/>
            <person name="Dyer D.W."/>
            <person name="Iandolo J.J."/>
        </authorList>
    </citation>
    <scope>NUCLEOTIDE SEQUENCE [LARGE SCALE GENOMIC DNA]</scope>
    <source>
        <strain>NCTC 8325 / PS 47</strain>
    </source>
</reference>
<reference key="2">
    <citation type="journal article" date="2002" name="Proc. Natl. Acad. Sci. U.S.A.">
        <title>An iron-regulated sortase anchors a class of surface protein during Staphylococcus aureus pathogenesis.</title>
        <authorList>
            <person name="Mazmanian S.K."/>
            <person name="Ton-That H."/>
            <person name="Su K."/>
            <person name="Schneewind O."/>
        </authorList>
    </citation>
    <scope>SUBCELLULAR LOCATION</scope>
    <scope>PROCESSING BY SORTASE A</scope>
    <source>
        <strain>RN4220</strain>
    </source>
</reference>
<reference key="3">
    <citation type="journal article" date="2008" name="EMBO J.">
        <title>Signal peptides direct surface proteins to two distinct envelope locations of Staphylococcus aureus.</title>
        <authorList>
            <person name="DeDent A."/>
            <person name="Bae T."/>
            <person name="Missiakas D.M."/>
            <person name="Schneewind O."/>
        </authorList>
    </citation>
    <scope>SUBCELLULAR LOCATION</scope>
    <source>
        <strain>RN4220</strain>
    </source>
</reference>
<reference key="4">
    <citation type="journal article" date="2010" name="J. Bacteriol.">
        <title>Synthetic effects of secG and secY2 mutations on exoproteome biogenesis in Staphylococcus aureus.</title>
        <authorList>
            <person name="Sibbald M.J."/>
            <person name="Winter T."/>
            <person name="van der Kooi-Pol M.M."/>
            <person name="Buist G."/>
            <person name="Tsompanidou E."/>
            <person name="Bosma T."/>
            <person name="Schafer T."/>
            <person name="Ohlsen K."/>
            <person name="Hecker M."/>
            <person name="Antelmann H."/>
            <person name="Engelmann S."/>
            <person name="van Dijl J.M."/>
        </authorList>
    </citation>
    <scope>IDENTIFICATION BY MASS SPECTROSCOPY</scope>
    <scope>SUBCELLULAR LOCATION</scope>
    <scope>INDUCTION</scope>
    <source>
        <strain>RN4220</strain>
    </source>
</reference>
<reference key="5">
    <citation type="journal article" date="2016" name="Sci. Rep.">
        <title>The interaction between Staphylococcus aureus SdrD and desmoglein 1 is important for adhesion to host cells.</title>
        <authorList>
            <person name="Askarian F."/>
            <person name="Ajayi C."/>
            <person name="Hanssen A.M."/>
            <person name="van Sorge N.M."/>
            <person name="Pettersen I."/>
            <person name="Diep D.B."/>
            <person name="Sollid J.U."/>
            <person name="Johannessen M."/>
        </authorList>
    </citation>
    <scope>FUNCTION</scope>
    <scope>INTERACTION WITH HOST DSG1</scope>
    <source>
        <strain>NCTC 8325 / PS 47</strain>
    </source>
</reference>
<reference key="6">
    <citation type="journal article" date="2017" name="Infect. Immun.">
        <title>Serine-Aspartate Repeat Protein D Increases Staphylococcus aureus Virulence and Survival in Blood.</title>
        <authorList>
            <person name="Askarian F."/>
            <person name="Uchiyama S."/>
            <person name="Valderrama J.A."/>
            <person name="Ajayi C."/>
            <person name="Sollid J.U.E."/>
            <person name="van Sorge N.M."/>
            <person name="Nizet V."/>
            <person name="van Strijp J.A.G."/>
            <person name="Johannessen M."/>
        </authorList>
    </citation>
    <scope>FUNCTION</scope>
    <scope>DISRUPTION PHENOTYPE</scope>
    <source>
        <strain>NCTC 8325 / PS 47</strain>
    </source>
</reference>
<feature type="signal peptide" evidence="1">
    <location>
        <begin position="1"/>
        <end position="35"/>
    </location>
</feature>
<feature type="chain" id="PRO_0000281204" description="Serine-aspartate repeat-containing protein D">
    <location>
        <begin position="36"/>
        <end position="1315"/>
    </location>
</feature>
<feature type="propeptide" id="PRO_0000281205" description="Removed by sortase" evidence="2 9">
    <location>
        <begin position="1316"/>
        <end position="1349"/>
    </location>
</feature>
<feature type="domain" description="CNA-B 1">
    <location>
        <begin position="569"/>
        <end position="680"/>
    </location>
</feature>
<feature type="domain" description="CNA-B 2">
    <location>
        <begin position="681"/>
        <end position="791"/>
    </location>
</feature>
<feature type="domain" description="CNA-B 3">
    <location>
        <begin position="792"/>
        <end position="901"/>
    </location>
</feature>
<feature type="domain" description="CNA-B 4">
    <location>
        <begin position="902"/>
        <end position="1012"/>
    </location>
</feature>
<feature type="domain" description="CNA-B 5">
    <location>
        <begin position="1013"/>
        <end position="1123"/>
    </location>
</feature>
<feature type="region of interest" description="Ligand binding A region">
    <location>
        <begin position="36"/>
        <end position="568"/>
    </location>
</feature>
<feature type="region of interest" description="Disordered" evidence="3">
    <location>
        <begin position="54"/>
        <end position="185"/>
    </location>
</feature>
<feature type="region of interest" description="Disordered" evidence="3">
    <location>
        <begin position="856"/>
        <end position="883"/>
    </location>
</feature>
<feature type="region of interest" description="Disordered" evidence="3">
    <location>
        <begin position="972"/>
        <end position="992"/>
    </location>
</feature>
<feature type="region of interest" description="Disordered" evidence="3">
    <location>
        <begin position="1081"/>
        <end position="1325"/>
    </location>
</feature>
<feature type="short sequence motif" description="YSIRK-G/S signaling motif" evidence="10">
    <location>
        <begin position="23"/>
        <end position="34"/>
    </location>
</feature>
<feature type="short sequence motif" description="LPXTG sorting signal" evidence="2">
    <location>
        <begin position="1312"/>
        <end position="1316"/>
    </location>
</feature>
<feature type="compositionally biased region" description="Polar residues" evidence="3">
    <location>
        <begin position="62"/>
        <end position="71"/>
    </location>
</feature>
<feature type="compositionally biased region" description="Polar residues" evidence="3">
    <location>
        <begin position="94"/>
        <end position="108"/>
    </location>
</feature>
<feature type="compositionally biased region" description="Basic and acidic residues" evidence="3">
    <location>
        <begin position="130"/>
        <end position="145"/>
    </location>
</feature>
<feature type="compositionally biased region" description="Polar residues" evidence="3">
    <location>
        <begin position="146"/>
        <end position="155"/>
    </location>
</feature>
<feature type="compositionally biased region" description="Polar residues" evidence="3">
    <location>
        <begin position="163"/>
        <end position="173"/>
    </location>
</feature>
<feature type="compositionally biased region" description="Basic and acidic residues" evidence="3">
    <location>
        <begin position="174"/>
        <end position="183"/>
    </location>
</feature>
<feature type="compositionally biased region" description="Polar residues" evidence="3">
    <location>
        <begin position="860"/>
        <end position="869"/>
    </location>
</feature>
<feature type="compositionally biased region" description="Polar residues" evidence="3">
    <location>
        <begin position="972"/>
        <end position="981"/>
    </location>
</feature>
<feature type="compositionally biased region" description="Acidic residues" evidence="3">
    <location>
        <begin position="1091"/>
        <end position="1101"/>
    </location>
</feature>
<feature type="compositionally biased region" description="Acidic residues" evidence="3">
    <location>
        <begin position="1118"/>
        <end position="1288"/>
    </location>
</feature>
<feature type="modified residue" description="Pentaglycyl murein peptidoglycan amidated threonine" evidence="2">
    <location>
        <position position="1315"/>
    </location>
</feature>
<proteinExistence type="evidence at protein level"/>
<accession>Q2G0L4</accession>
<name>SDRD_STAA8</name>
<keyword id="KW-0106">Calcium</keyword>
<keyword id="KW-0134">Cell wall</keyword>
<keyword id="KW-0572">Peptidoglycan-anchor</keyword>
<keyword id="KW-1185">Reference proteome</keyword>
<keyword id="KW-0677">Repeat</keyword>
<keyword id="KW-0964">Secreted</keyword>
<keyword id="KW-0732">Signal</keyword>
<sequence>MLNRENKTAITRKGMVSNRLNKFSIRKYTVGTASILVGTTLIFGLGNQEAKAAESTNKELNEATTSASDNQSSDKVDMQQLNQEDNTKNDNQKEMVSSQGNETTSNGNKLIEKESVQSTTGNKVEVSTAKSDEQASPKSTNEDLNTKQTISNQEALQPDLQENKSVVNVQPTNEENKKVDAKTESTTLNVKSDAIKSNDETLVDNNSNSNNENNADIILPKSTAPKRLNTRMRIAAVQPSSTEAKNVNDLITSNTTLTVVDADKNNKIVPAQDYLSLKSQITVDDKVKSGDYFTIKYSDTVQVYGLNPEDIKNIGDIKDPNNGETIATAKHDTANNLITYTFTDYVDRFNSVQMGINYSIYMDADTIPVSKNDVEFNVTIGNTTTKTTANIQYPDYVVNEKNSIGSAFTETVSHVGNKENPGYYKQTIYVNPSENSLTNAKLKVQAYHSSYPNNIGQINKDVTDIKIYQVPKGYTLNKGYDVNTKELTDVTNQYLQKITYGDNNSAVIDFGNADSAYVVMVNTKFQYTNSESPTLVQMATLSSTGNKSVSTGNALGFTNNQSGGAGQEVYKIGNYVWEDTNKNGVQELGEKGVGNVTVTVFDNNTNTKVGEAVTKEDGSYLIPNLPNGDYRVEFSNLPKGYEVTPSKQGNNEELDSNGLSSVITVNGKDNLSADLGIYKPKYNLGDYVWEDTNKNGIQDQDEKGISGVTVTLKDENGNVLKTVTTDADGKYKFTDLDNGNYKVEFTTPEGYTPTTVTSGSDIEKDSNGLTTTGVINGADNMTLDSGFYKTPKYNLGNYVWEDTNKDGKQDSTEKGISGVTVTLKNENGEVLQTTKTDKDGKYQFTGLENGTYKVEFETPSGYTPTQVGSGTDEGIDSNGTSTTGVIKDKDNDTIDSGFYKPTYNLGDYVWEDTNKNGVQDKDEKGISGVTVTLKDENDKVLKTVTTDENGKYQFTDLNNGTYKVEFETPSGYTPTSVTSGNDTEKDSNGLTTTGVIKDADNMTLDSGFYKTPKYSLGDYVWYDSNKDGKQDSTEKGIKDVKVTLLNEKGEVIGTTKTDENGKYCFDNLDSGKYKVIFEKPAGLTQTVTNTTEDDKDADGGEVDVTITDHDDFTLDNGYFEEDTSDSDSDSDSDSDSDSDSDSDSDSDSDSDSDSDSDSDSDSDSDSDSDSDSDSDSDSDSDSDSDSDSDSDSDSDSDSDSDSDSDSDSDSDSDSDSDSDSDSDSDSDSDSDSDSDSDSDSDSDSDSDSDSDSDSDSDSDSDSDSDSDSDSDSDSDSDSDSDSDSDSDSDAGKHTPVKPMSTTKDHHNKAKALPETGSENNGSNNATLFGGLFAALGSLLLFGRRKKQNK</sequence>
<evidence type="ECO:0000255" key="1"/>
<evidence type="ECO:0000255" key="2">
    <source>
        <dbReference type="PROSITE-ProRule" id="PRU00477"/>
    </source>
</evidence>
<evidence type="ECO:0000256" key="3">
    <source>
        <dbReference type="SAM" id="MobiDB-lite"/>
    </source>
</evidence>
<evidence type="ECO:0000269" key="4">
    <source>
    </source>
</evidence>
<evidence type="ECO:0000269" key="5">
    <source>
    </source>
</evidence>
<evidence type="ECO:0000269" key="6">
    <source>
    </source>
</evidence>
<evidence type="ECO:0000269" key="7">
    <source>
    </source>
</evidence>
<evidence type="ECO:0000305" key="8"/>
<evidence type="ECO:0000305" key="9">
    <source>
    </source>
</evidence>
<evidence type="ECO:0000305" key="10">
    <source>
    </source>
</evidence>
<protein>
    <recommendedName>
        <fullName>Serine-aspartate repeat-containing protein D</fullName>
    </recommendedName>
</protein>